<proteinExistence type="inferred from homology"/>
<reference key="1">
    <citation type="journal article" date="1991" name="Proc. Natl. Acad. Sci. U.S.A.">
        <title>Efflux-mediated multidrug resistance in Bacillus subtilis: similarities and dissimilarities with the mammalian system.</title>
        <authorList>
            <person name="Neyfakh A.A."/>
            <person name="Bidnenko V.E."/>
            <person name="Chen L.B."/>
        </authorList>
    </citation>
    <scope>NUCLEOTIDE SEQUENCE [GENOMIC DNA]</scope>
    <source>
        <strain>168 / BD170</strain>
    </source>
</reference>
<reference key="2">
    <citation type="journal article" date="1994" name="J. Biol. Chem.">
        <title>A protein that activates expression of a multidrug efflux transporter upon binding the transporter substrates.</title>
        <authorList>
            <person name="Ahmed M."/>
            <person name="Borsch C.M."/>
            <person name="Taylor S.S."/>
            <person name="Vazquez-Laslop N."/>
            <person name="Neyfakh A.A."/>
        </authorList>
    </citation>
    <scope>NUCLEOTIDE SEQUENCE [GENOMIC DNA]</scope>
    <source>
        <strain>168 / Marburg / ATCC 6051 / DSM 10 / JCM 1465 / NBRC 13719 / NCIMB 3610 / NRRL NRS-744 / VKM B-501</strain>
    </source>
</reference>
<reference key="3">
    <citation type="journal article" date="1996" name="Microbiology">
        <title>Systematic sequencing of the 283 kb 210 degrees-232 degrees region of the Bacillus subtilis genome containing the skin element and many sporulation genes.</title>
        <authorList>
            <person name="Mizuno M."/>
            <person name="Masuda S."/>
            <person name="Takemaru K."/>
            <person name="Hosono S."/>
            <person name="Sato T."/>
            <person name="Takeuchi M."/>
            <person name="Kobayashi Y."/>
        </authorList>
    </citation>
    <scope>NUCLEOTIDE SEQUENCE [GENOMIC DNA]</scope>
    <source>
        <strain>168 / JH642</strain>
    </source>
</reference>
<reference key="4">
    <citation type="journal article" date="1997" name="Nature">
        <title>The complete genome sequence of the Gram-positive bacterium Bacillus subtilis.</title>
        <authorList>
            <person name="Kunst F."/>
            <person name="Ogasawara N."/>
            <person name="Moszer I."/>
            <person name="Albertini A.M."/>
            <person name="Alloni G."/>
            <person name="Azevedo V."/>
            <person name="Bertero M.G."/>
            <person name="Bessieres P."/>
            <person name="Bolotin A."/>
            <person name="Borchert S."/>
            <person name="Borriss R."/>
            <person name="Boursier L."/>
            <person name="Brans A."/>
            <person name="Braun M."/>
            <person name="Brignell S.C."/>
            <person name="Bron S."/>
            <person name="Brouillet S."/>
            <person name="Bruschi C.V."/>
            <person name="Caldwell B."/>
            <person name="Capuano V."/>
            <person name="Carter N.M."/>
            <person name="Choi S.-K."/>
            <person name="Codani J.-J."/>
            <person name="Connerton I.F."/>
            <person name="Cummings N.J."/>
            <person name="Daniel R.A."/>
            <person name="Denizot F."/>
            <person name="Devine K.M."/>
            <person name="Duesterhoeft A."/>
            <person name="Ehrlich S.D."/>
            <person name="Emmerson P.T."/>
            <person name="Entian K.-D."/>
            <person name="Errington J."/>
            <person name="Fabret C."/>
            <person name="Ferrari E."/>
            <person name="Foulger D."/>
            <person name="Fritz C."/>
            <person name="Fujita M."/>
            <person name="Fujita Y."/>
            <person name="Fuma S."/>
            <person name="Galizzi A."/>
            <person name="Galleron N."/>
            <person name="Ghim S.-Y."/>
            <person name="Glaser P."/>
            <person name="Goffeau A."/>
            <person name="Golightly E.J."/>
            <person name="Grandi G."/>
            <person name="Guiseppi G."/>
            <person name="Guy B.J."/>
            <person name="Haga K."/>
            <person name="Haiech J."/>
            <person name="Harwood C.R."/>
            <person name="Henaut A."/>
            <person name="Hilbert H."/>
            <person name="Holsappel S."/>
            <person name="Hosono S."/>
            <person name="Hullo M.-F."/>
            <person name="Itaya M."/>
            <person name="Jones L.-M."/>
            <person name="Joris B."/>
            <person name="Karamata D."/>
            <person name="Kasahara Y."/>
            <person name="Klaerr-Blanchard M."/>
            <person name="Klein C."/>
            <person name="Kobayashi Y."/>
            <person name="Koetter P."/>
            <person name="Koningstein G."/>
            <person name="Krogh S."/>
            <person name="Kumano M."/>
            <person name="Kurita K."/>
            <person name="Lapidus A."/>
            <person name="Lardinois S."/>
            <person name="Lauber J."/>
            <person name="Lazarevic V."/>
            <person name="Lee S.-M."/>
            <person name="Levine A."/>
            <person name="Liu H."/>
            <person name="Masuda S."/>
            <person name="Mauel C."/>
            <person name="Medigue C."/>
            <person name="Medina N."/>
            <person name="Mellado R.P."/>
            <person name="Mizuno M."/>
            <person name="Moestl D."/>
            <person name="Nakai S."/>
            <person name="Noback M."/>
            <person name="Noone D."/>
            <person name="O'Reilly M."/>
            <person name="Ogawa K."/>
            <person name="Ogiwara A."/>
            <person name="Oudega B."/>
            <person name="Park S.-H."/>
            <person name="Parro V."/>
            <person name="Pohl T.M."/>
            <person name="Portetelle D."/>
            <person name="Porwollik S."/>
            <person name="Prescott A.M."/>
            <person name="Presecan E."/>
            <person name="Pujic P."/>
            <person name="Purnelle B."/>
            <person name="Rapoport G."/>
            <person name="Rey M."/>
            <person name="Reynolds S."/>
            <person name="Rieger M."/>
            <person name="Rivolta C."/>
            <person name="Rocha E."/>
            <person name="Roche B."/>
            <person name="Rose M."/>
            <person name="Sadaie Y."/>
            <person name="Sato T."/>
            <person name="Scanlan E."/>
            <person name="Schleich S."/>
            <person name="Schroeter R."/>
            <person name="Scoffone F."/>
            <person name="Sekiguchi J."/>
            <person name="Sekowska A."/>
            <person name="Seror S.J."/>
            <person name="Serror P."/>
            <person name="Shin B.-S."/>
            <person name="Soldo B."/>
            <person name="Sorokin A."/>
            <person name="Tacconi E."/>
            <person name="Takagi T."/>
            <person name="Takahashi H."/>
            <person name="Takemaru K."/>
            <person name="Takeuchi M."/>
            <person name="Tamakoshi A."/>
            <person name="Tanaka T."/>
            <person name="Terpstra P."/>
            <person name="Tognoni A."/>
            <person name="Tosato V."/>
            <person name="Uchiyama S."/>
            <person name="Vandenbol M."/>
            <person name="Vannier F."/>
            <person name="Vassarotti A."/>
            <person name="Viari A."/>
            <person name="Wambutt R."/>
            <person name="Wedler E."/>
            <person name="Wedler H."/>
            <person name="Weitzenegger T."/>
            <person name="Winters P."/>
            <person name="Wipat A."/>
            <person name="Yamamoto H."/>
            <person name="Yamane K."/>
            <person name="Yasumoto K."/>
            <person name="Yata K."/>
            <person name="Yoshida K."/>
            <person name="Yoshikawa H.-F."/>
            <person name="Zumstein E."/>
            <person name="Yoshikawa H."/>
            <person name="Danchin A."/>
        </authorList>
    </citation>
    <scope>NUCLEOTIDE SEQUENCE [LARGE SCALE GENOMIC DNA]</scope>
    <source>
        <strain>168</strain>
    </source>
</reference>
<reference key="5">
    <citation type="journal article" date="2009" name="Microbiology">
        <title>From a consortium sequence to a unified sequence: the Bacillus subtilis 168 reference genome a decade later.</title>
        <authorList>
            <person name="Barbe V."/>
            <person name="Cruveiller S."/>
            <person name="Kunst F."/>
            <person name="Lenoble P."/>
            <person name="Meurice G."/>
            <person name="Sekowska A."/>
            <person name="Vallenet D."/>
            <person name="Wang T."/>
            <person name="Moszer I."/>
            <person name="Medigue C."/>
            <person name="Danchin A."/>
        </authorList>
    </citation>
    <scope>SEQUENCE REVISION TO 109</scope>
</reference>
<accession>P33449</accession>
<organism>
    <name type="scientific">Bacillus subtilis (strain 168)</name>
    <dbReference type="NCBI Taxonomy" id="224308"/>
    <lineage>
        <taxon>Bacteria</taxon>
        <taxon>Bacillati</taxon>
        <taxon>Bacillota</taxon>
        <taxon>Bacilli</taxon>
        <taxon>Bacillales</taxon>
        <taxon>Bacillaceae</taxon>
        <taxon>Bacillus</taxon>
    </lineage>
</organism>
<comment type="function">
    <text>Energy-dependent efflux pump responsible for decreased drug accumulation in multi-drug-resistant cells. Probably uses a transmembrane proton gradient as the energy source. Causes the efflux of a variety of toxic substances, including such structurally diverse compounds as ethidium bromide, rhodamine and acridine dyes, tetraphenylphosphonium, puromycin, chloramphenicol, doxorubicin, and fluoroquinolone antibiotics.</text>
</comment>
<comment type="subcellular location">
    <subcellularLocation>
        <location>Cell membrane</location>
        <topology>Multi-pass membrane protein</topology>
    </subcellularLocation>
</comment>
<comment type="similarity">
    <text evidence="2">Belongs to the major facilitator superfamily. TCR/Tet family.</text>
</comment>
<protein>
    <recommendedName>
        <fullName>Multidrug resistance protein 1</fullName>
    </recommendedName>
    <alternativeName>
        <fullName>Multidrug-efflux transporter 1</fullName>
    </alternativeName>
</protein>
<evidence type="ECO:0000255" key="1"/>
<evidence type="ECO:0000305" key="2"/>
<sequence length="389" mass="42232">MEKKNITLTILLTNLFIAFLGIGLVIPVTPTIMNELHLSGTAVGYMVACFAITQLIVSPIAGRWVDRFGRKIMIVIGLLFFSVSEFLFGIGKTVEMLFISRMLGGISAAFIMPGVTAFIADITTIKTRPKALGYMSAAISTGFIIGPGIGGFLAEVHSRLPFFFAAAFALLAAILSILTLREPERNPENQEIKGQKTGFKRIFAPMYFIAFLIILISSFGLASFESLFALFVDHKFGFTASDIAIMITGGAIVGAITQVVLFDRFTRWFGEIHLIRYSLILSTSLVFLLTTVHSYVAILLVTVTVFVGFDLMRPAVTTYLSKIAGNEQGFAGGMNSMFTSIGNVFGPIIGGMLFDIDVNYPFYFATVTLAIGIALTIAWKAPAHLKAST</sequence>
<name>BMR1_BACSU</name>
<feature type="chain" id="PRO_0000173317" description="Multidrug resistance protein 1">
    <location>
        <begin position="1"/>
        <end position="389"/>
    </location>
</feature>
<feature type="transmembrane region" description="Helical" evidence="1">
    <location>
        <begin position="6"/>
        <end position="26"/>
    </location>
</feature>
<feature type="transmembrane region" description="Helical" evidence="1">
    <location>
        <begin position="42"/>
        <end position="62"/>
    </location>
</feature>
<feature type="transmembrane region" description="Helical" evidence="1">
    <location>
        <begin position="71"/>
        <end position="91"/>
    </location>
</feature>
<feature type="transmembrane region" description="Helical" evidence="1">
    <location>
        <begin position="102"/>
        <end position="122"/>
    </location>
</feature>
<feature type="transmembrane region" description="Helical" evidence="1">
    <location>
        <begin position="134"/>
        <end position="154"/>
    </location>
</feature>
<feature type="transmembrane region" description="Helical" evidence="1">
    <location>
        <begin position="160"/>
        <end position="180"/>
    </location>
</feature>
<feature type="transmembrane region" description="Helical" evidence="1">
    <location>
        <begin position="202"/>
        <end position="222"/>
    </location>
</feature>
<feature type="transmembrane region" description="Helical" evidence="1">
    <location>
        <begin position="243"/>
        <end position="263"/>
    </location>
</feature>
<feature type="transmembrane region" description="Helical" evidence="1">
    <location>
        <begin position="286"/>
        <end position="306"/>
    </location>
</feature>
<feature type="transmembrane region" description="Helical" evidence="1">
    <location>
        <begin position="336"/>
        <end position="356"/>
    </location>
</feature>
<feature type="transmembrane region" description="Helical" evidence="1">
    <location>
        <begin position="358"/>
        <end position="378"/>
    </location>
</feature>
<feature type="sequence conflict" description="In Ref. 1; AAA22277, 2; AAB81539 and 3; BAA12601." evidence="2" ref="1 2 3">
    <original>A</original>
    <variation>P</variation>
    <location>
        <position position="109"/>
    </location>
</feature>
<gene>
    <name type="primary">bmr</name>
    <name type="synonym">bmr1</name>
    <name type="ordered locus">BSU24010</name>
</gene>
<keyword id="KW-0046">Antibiotic resistance</keyword>
<keyword id="KW-1003">Cell membrane</keyword>
<keyword id="KW-0472">Membrane</keyword>
<keyword id="KW-1185">Reference proteome</keyword>
<keyword id="KW-0812">Transmembrane</keyword>
<keyword id="KW-1133">Transmembrane helix</keyword>
<keyword id="KW-0813">Transport</keyword>
<dbReference type="EMBL" id="M33768">
    <property type="protein sequence ID" value="AAA22277.1"/>
    <property type="molecule type" value="Genomic_DNA"/>
</dbReference>
<dbReference type="EMBL" id="L25604">
    <property type="protein sequence ID" value="AAB81539.1"/>
    <property type="molecule type" value="Genomic_DNA"/>
</dbReference>
<dbReference type="EMBL" id="D84432">
    <property type="protein sequence ID" value="BAA12601.1"/>
    <property type="molecule type" value="Genomic_DNA"/>
</dbReference>
<dbReference type="EMBL" id="AL009126">
    <property type="protein sequence ID" value="CAB14332.2"/>
    <property type="molecule type" value="Genomic_DNA"/>
</dbReference>
<dbReference type="PIR" id="A39705">
    <property type="entry name" value="A39705"/>
</dbReference>
<dbReference type="RefSeq" id="NP_390281.2">
    <property type="nucleotide sequence ID" value="NC_000964.3"/>
</dbReference>
<dbReference type="RefSeq" id="WP_003230328.1">
    <property type="nucleotide sequence ID" value="NZ_OZ025638.1"/>
</dbReference>
<dbReference type="SMR" id="P33449"/>
<dbReference type="FunCoup" id="P33449">
    <property type="interactions" value="472"/>
</dbReference>
<dbReference type="STRING" id="224308.BSU24010"/>
<dbReference type="TCDB" id="2.A.1.2.70">
    <property type="family name" value="the major facilitator superfamily (mfs)"/>
</dbReference>
<dbReference type="PaxDb" id="224308-BSU24010"/>
<dbReference type="EnsemblBacteria" id="CAB14332">
    <property type="protein sequence ID" value="CAB14332"/>
    <property type="gene ID" value="BSU_24010"/>
</dbReference>
<dbReference type="GeneID" id="938680"/>
<dbReference type="KEGG" id="bsu:BSU24010"/>
<dbReference type="PATRIC" id="fig|224308.179.peg.2615"/>
<dbReference type="eggNOG" id="COG2814">
    <property type="taxonomic scope" value="Bacteria"/>
</dbReference>
<dbReference type="InParanoid" id="P33449"/>
<dbReference type="OrthoDB" id="9793283at2"/>
<dbReference type="PhylomeDB" id="P33449"/>
<dbReference type="BioCyc" id="BSUB:BSU24010-MONOMER"/>
<dbReference type="Proteomes" id="UP000001570">
    <property type="component" value="Chromosome"/>
</dbReference>
<dbReference type="GO" id="GO:0005886">
    <property type="term" value="C:plasma membrane"/>
    <property type="evidence" value="ECO:0007669"/>
    <property type="project" value="UniProtKB-SubCell"/>
</dbReference>
<dbReference type="GO" id="GO:0022857">
    <property type="term" value="F:transmembrane transporter activity"/>
    <property type="evidence" value="ECO:0007669"/>
    <property type="project" value="InterPro"/>
</dbReference>
<dbReference type="GO" id="GO:0046677">
    <property type="term" value="P:response to antibiotic"/>
    <property type="evidence" value="ECO:0007669"/>
    <property type="project" value="UniProtKB-KW"/>
</dbReference>
<dbReference type="CDD" id="cd17325">
    <property type="entry name" value="MFS_MdtG_SLC18_like"/>
    <property type="match status" value="1"/>
</dbReference>
<dbReference type="Gene3D" id="1.20.1250.20">
    <property type="entry name" value="MFS general substrate transporter like domains"/>
    <property type="match status" value="1"/>
</dbReference>
<dbReference type="InterPro" id="IPR011701">
    <property type="entry name" value="MFS"/>
</dbReference>
<dbReference type="InterPro" id="IPR020846">
    <property type="entry name" value="MFS_dom"/>
</dbReference>
<dbReference type="InterPro" id="IPR036259">
    <property type="entry name" value="MFS_trans_sf"/>
</dbReference>
<dbReference type="InterPro" id="IPR005829">
    <property type="entry name" value="Sugar_transporter_CS"/>
</dbReference>
<dbReference type="InterPro" id="IPR001958">
    <property type="entry name" value="Tet-R_TetA/multi-R_MdtG-like"/>
</dbReference>
<dbReference type="PANTHER" id="PTHR23504">
    <property type="entry name" value="MAJOR FACILITATOR SUPERFAMILY DOMAIN-CONTAINING PROTEIN 10"/>
    <property type="match status" value="1"/>
</dbReference>
<dbReference type="PANTHER" id="PTHR23504:SF115">
    <property type="entry name" value="MULTIDRUG RESISTANCE PROTEIN 2"/>
    <property type="match status" value="1"/>
</dbReference>
<dbReference type="Pfam" id="PF07690">
    <property type="entry name" value="MFS_1"/>
    <property type="match status" value="1"/>
</dbReference>
<dbReference type="PRINTS" id="PR01035">
    <property type="entry name" value="TCRTETA"/>
</dbReference>
<dbReference type="SUPFAM" id="SSF103473">
    <property type="entry name" value="MFS general substrate transporter"/>
    <property type="match status" value="1"/>
</dbReference>
<dbReference type="PROSITE" id="PS50850">
    <property type="entry name" value="MFS"/>
    <property type="match status" value="1"/>
</dbReference>
<dbReference type="PROSITE" id="PS00216">
    <property type="entry name" value="SUGAR_TRANSPORT_1"/>
    <property type="match status" value="1"/>
</dbReference>